<sequence length="96" mass="10388">MKLRPLHDRVIVKRVENETKTASGIVIPDSAAEKPDQGEVLAVGPGKKNDKGEISPMAVKVGDRVLFGKYSGQTVKVAGDELLVMKEDDLFAVVEK</sequence>
<dbReference type="EMBL" id="CP000267">
    <property type="protein sequence ID" value="ABD68873.1"/>
    <property type="molecule type" value="Genomic_DNA"/>
</dbReference>
<dbReference type="RefSeq" id="WP_011463442.1">
    <property type="nucleotide sequence ID" value="NC_007908.1"/>
</dbReference>
<dbReference type="SMR" id="Q21ZD0"/>
<dbReference type="STRING" id="338969.Rfer_1132"/>
<dbReference type="KEGG" id="rfr:Rfer_1132"/>
<dbReference type="eggNOG" id="COG0234">
    <property type="taxonomic scope" value="Bacteria"/>
</dbReference>
<dbReference type="HOGENOM" id="CLU_132825_1_0_4"/>
<dbReference type="OrthoDB" id="9806791at2"/>
<dbReference type="Proteomes" id="UP000008332">
    <property type="component" value="Chromosome"/>
</dbReference>
<dbReference type="GO" id="GO:0005737">
    <property type="term" value="C:cytoplasm"/>
    <property type="evidence" value="ECO:0007669"/>
    <property type="project" value="UniProtKB-SubCell"/>
</dbReference>
<dbReference type="GO" id="GO:0005524">
    <property type="term" value="F:ATP binding"/>
    <property type="evidence" value="ECO:0007669"/>
    <property type="project" value="InterPro"/>
</dbReference>
<dbReference type="GO" id="GO:0046872">
    <property type="term" value="F:metal ion binding"/>
    <property type="evidence" value="ECO:0007669"/>
    <property type="project" value="TreeGrafter"/>
</dbReference>
<dbReference type="GO" id="GO:0044183">
    <property type="term" value="F:protein folding chaperone"/>
    <property type="evidence" value="ECO:0007669"/>
    <property type="project" value="InterPro"/>
</dbReference>
<dbReference type="GO" id="GO:0051087">
    <property type="term" value="F:protein-folding chaperone binding"/>
    <property type="evidence" value="ECO:0007669"/>
    <property type="project" value="TreeGrafter"/>
</dbReference>
<dbReference type="GO" id="GO:0051082">
    <property type="term" value="F:unfolded protein binding"/>
    <property type="evidence" value="ECO:0007669"/>
    <property type="project" value="TreeGrafter"/>
</dbReference>
<dbReference type="GO" id="GO:0051085">
    <property type="term" value="P:chaperone cofactor-dependent protein refolding"/>
    <property type="evidence" value="ECO:0007669"/>
    <property type="project" value="TreeGrafter"/>
</dbReference>
<dbReference type="CDD" id="cd00320">
    <property type="entry name" value="cpn10"/>
    <property type="match status" value="1"/>
</dbReference>
<dbReference type="FunFam" id="2.30.33.40:FF:000001">
    <property type="entry name" value="10 kDa chaperonin"/>
    <property type="match status" value="1"/>
</dbReference>
<dbReference type="Gene3D" id="2.30.33.40">
    <property type="entry name" value="GroES chaperonin"/>
    <property type="match status" value="1"/>
</dbReference>
<dbReference type="HAMAP" id="MF_00580">
    <property type="entry name" value="CH10"/>
    <property type="match status" value="1"/>
</dbReference>
<dbReference type="InterPro" id="IPR020818">
    <property type="entry name" value="Chaperonin_GroES"/>
</dbReference>
<dbReference type="InterPro" id="IPR037124">
    <property type="entry name" value="Chaperonin_GroES_sf"/>
</dbReference>
<dbReference type="InterPro" id="IPR018369">
    <property type="entry name" value="Chaprnonin_Cpn10_CS"/>
</dbReference>
<dbReference type="InterPro" id="IPR011032">
    <property type="entry name" value="GroES-like_sf"/>
</dbReference>
<dbReference type="NCBIfam" id="NF001527">
    <property type="entry name" value="PRK00364.1-2"/>
    <property type="match status" value="1"/>
</dbReference>
<dbReference type="NCBIfam" id="NF001529">
    <property type="entry name" value="PRK00364.1-5"/>
    <property type="match status" value="1"/>
</dbReference>
<dbReference type="NCBIfam" id="NF001531">
    <property type="entry name" value="PRK00364.2-2"/>
    <property type="match status" value="1"/>
</dbReference>
<dbReference type="NCBIfam" id="NF001533">
    <property type="entry name" value="PRK00364.2-4"/>
    <property type="match status" value="1"/>
</dbReference>
<dbReference type="PANTHER" id="PTHR10772">
    <property type="entry name" value="10 KDA HEAT SHOCK PROTEIN"/>
    <property type="match status" value="1"/>
</dbReference>
<dbReference type="PANTHER" id="PTHR10772:SF58">
    <property type="entry name" value="CO-CHAPERONIN GROES"/>
    <property type="match status" value="1"/>
</dbReference>
<dbReference type="Pfam" id="PF00166">
    <property type="entry name" value="Cpn10"/>
    <property type="match status" value="1"/>
</dbReference>
<dbReference type="PRINTS" id="PR00297">
    <property type="entry name" value="CHAPERONIN10"/>
</dbReference>
<dbReference type="SMART" id="SM00883">
    <property type="entry name" value="Cpn10"/>
    <property type="match status" value="1"/>
</dbReference>
<dbReference type="SUPFAM" id="SSF50129">
    <property type="entry name" value="GroES-like"/>
    <property type="match status" value="1"/>
</dbReference>
<dbReference type="PROSITE" id="PS00681">
    <property type="entry name" value="CHAPERONINS_CPN10"/>
    <property type="match status" value="1"/>
</dbReference>
<reference key="1">
    <citation type="submission" date="2006-02" db="EMBL/GenBank/DDBJ databases">
        <title>Complete sequence of chromosome of Rhodoferax ferrireducens DSM 15236.</title>
        <authorList>
            <person name="Copeland A."/>
            <person name="Lucas S."/>
            <person name="Lapidus A."/>
            <person name="Barry K."/>
            <person name="Detter J.C."/>
            <person name="Glavina del Rio T."/>
            <person name="Hammon N."/>
            <person name="Israni S."/>
            <person name="Pitluck S."/>
            <person name="Brettin T."/>
            <person name="Bruce D."/>
            <person name="Han C."/>
            <person name="Tapia R."/>
            <person name="Gilna P."/>
            <person name="Kiss H."/>
            <person name="Schmutz J."/>
            <person name="Larimer F."/>
            <person name="Land M."/>
            <person name="Kyrpides N."/>
            <person name="Ivanova N."/>
            <person name="Richardson P."/>
        </authorList>
    </citation>
    <scope>NUCLEOTIDE SEQUENCE [LARGE SCALE GENOMIC DNA]</scope>
    <source>
        <strain>ATCC BAA-621 / DSM 15236 / T118</strain>
    </source>
</reference>
<gene>
    <name evidence="1" type="primary">groES</name>
    <name evidence="1" type="synonym">groS</name>
    <name type="ordered locus">Rfer_1132</name>
</gene>
<accession>Q21ZD0</accession>
<organism>
    <name type="scientific">Albidiferax ferrireducens (strain ATCC BAA-621 / DSM 15236 / T118)</name>
    <name type="common">Rhodoferax ferrireducens</name>
    <dbReference type="NCBI Taxonomy" id="338969"/>
    <lineage>
        <taxon>Bacteria</taxon>
        <taxon>Pseudomonadati</taxon>
        <taxon>Pseudomonadota</taxon>
        <taxon>Betaproteobacteria</taxon>
        <taxon>Burkholderiales</taxon>
        <taxon>Comamonadaceae</taxon>
        <taxon>Rhodoferax</taxon>
    </lineage>
</organism>
<protein>
    <recommendedName>
        <fullName evidence="1">Co-chaperonin GroES</fullName>
    </recommendedName>
    <alternativeName>
        <fullName evidence="1">10 kDa chaperonin</fullName>
    </alternativeName>
    <alternativeName>
        <fullName evidence="1">Chaperonin-10</fullName>
        <shortName evidence="1">Cpn10</shortName>
    </alternativeName>
</protein>
<evidence type="ECO:0000255" key="1">
    <source>
        <dbReference type="HAMAP-Rule" id="MF_00580"/>
    </source>
</evidence>
<name>CH10_ALBFT</name>
<comment type="function">
    <text evidence="1">Together with the chaperonin GroEL, plays an essential role in assisting protein folding. The GroEL-GroES system forms a nano-cage that allows encapsulation of the non-native substrate proteins and provides a physical environment optimized to promote and accelerate protein folding. GroES binds to the apical surface of the GroEL ring, thereby capping the opening of the GroEL channel.</text>
</comment>
<comment type="subunit">
    <text evidence="1">Heptamer of 7 subunits arranged in a ring. Interacts with the chaperonin GroEL.</text>
</comment>
<comment type="subcellular location">
    <subcellularLocation>
        <location evidence="1">Cytoplasm</location>
    </subcellularLocation>
</comment>
<comment type="similarity">
    <text evidence="1">Belongs to the GroES chaperonin family.</text>
</comment>
<keyword id="KW-0143">Chaperone</keyword>
<keyword id="KW-0963">Cytoplasm</keyword>
<keyword id="KW-1185">Reference proteome</keyword>
<feature type="chain" id="PRO_1000025347" description="Co-chaperonin GroES">
    <location>
        <begin position="1"/>
        <end position="96"/>
    </location>
</feature>
<proteinExistence type="inferred from homology"/>